<sequence length="91" mass="10899">MSRTIFCTYLQRDAEGQDFQLYPGELGKRIYNEISKDAWAQWQHKQTMLINEKKLNMMNAEHRKLLEQEMVSFLFEGKDVHIEGYTPEDKK</sequence>
<dbReference type="EMBL" id="AM933173">
    <property type="protein sequence ID" value="CAR38810.1"/>
    <property type="molecule type" value="Genomic_DNA"/>
</dbReference>
<dbReference type="RefSeq" id="WP_000091706.1">
    <property type="nucleotide sequence ID" value="NC_011274.1"/>
</dbReference>
<dbReference type="SMR" id="B5RE71"/>
<dbReference type="KEGG" id="seg:SG3005"/>
<dbReference type="HOGENOM" id="CLU_170994_0_0_6"/>
<dbReference type="Proteomes" id="UP000008321">
    <property type="component" value="Chromosome"/>
</dbReference>
<dbReference type="GO" id="GO:0005829">
    <property type="term" value="C:cytosol"/>
    <property type="evidence" value="ECO:0007669"/>
    <property type="project" value="TreeGrafter"/>
</dbReference>
<dbReference type="GO" id="GO:0005506">
    <property type="term" value="F:iron ion binding"/>
    <property type="evidence" value="ECO:0007669"/>
    <property type="project" value="UniProtKB-UniRule"/>
</dbReference>
<dbReference type="GO" id="GO:0034599">
    <property type="term" value="P:cellular response to oxidative stress"/>
    <property type="evidence" value="ECO:0007669"/>
    <property type="project" value="TreeGrafter"/>
</dbReference>
<dbReference type="FunFam" id="1.10.3880.10:FF:000001">
    <property type="entry name" value="Probable Fe(2+)-trafficking protein"/>
    <property type="match status" value="1"/>
</dbReference>
<dbReference type="Gene3D" id="1.10.3880.10">
    <property type="entry name" value="Fe(II) trafficking protein YggX"/>
    <property type="match status" value="1"/>
</dbReference>
<dbReference type="HAMAP" id="MF_00686">
    <property type="entry name" value="Fe_traffic_YggX"/>
    <property type="match status" value="1"/>
</dbReference>
<dbReference type="InterPro" id="IPR007457">
    <property type="entry name" value="Fe_traffick_prot_YggX"/>
</dbReference>
<dbReference type="InterPro" id="IPR036766">
    <property type="entry name" value="Fe_traffick_prot_YggX_sf"/>
</dbReference>
<dbReference type="NCBIfam" id="NF003817">
    <property type="entry name" value="PRK05408.1"/>
    <property type="match status" value="1"/>
</dbReference>
<dbReference type="PANTHER" id="PTHR36965">
    <property type="entry name" value="FE(2+)-TRAFFICKING PROTEIN-RELATED"/>
    <property type="match status" value="1"/>
</dbReference>
<dbReference type="PANTHER" id="PTHR36965:SF1">
    <property type="entry name" value="FE(2+)-TRAFFICKING PROTEIN-RELATED"/>
    <property type="match status" value="1"/>
</dbReference>
<dbReference type="Pfam" id="PF04362">
    <property type="entry name" value="Iron_traffic"/>
    <property type="match status" value="1"/>
</dbReference>
<dbReference type="PIRSF" id="PIRSF029827">
    <property type="entry name" value="Fe_traffic_YggX"/>
    <property type="match status" value="1"/>
</dbReference>
<dbReference type="SUPFAM" id="SSF111148">
    <property type="entry name" value="YggX-like"/>
    <property type="match status" value="1"/>
</dbReference>
<keyword id="KW-0408">Iron</keyword>
<feature type="chain" id="PRO_1000131860" description="Probable Fe(2+)-trafficking protein">
    <location>
        <begin position="1"/>
        <end position="91"/>
    </location>
</feature>
<gene>
    <name evidence="1" type="primary">yggX</name>
    <name type="ordered locus">SG3005</name>
</gene>
<name>FETP_SALG2</name>
<evidence type="ECO:0000255" key="1">
    <source>
        <dbReference type="HAMAP-Rule" id="MF_00686"/>
    </source>
</evidence>
<accession>B5RE71</accession>
<reference key="1">
    <citation type="journal article" date="2008" name="Genome Res.">
        <title>Comparative genome analysis of Salmonella enteritidis PT4 and Salmonella gallinarum 287/91 provides insights into evolutionary and host adaptation pathways.</title>
        <authorList>
            <person name="Thomson N.R."/>
            <person name="Clayton D.J."/>
            <person name="Windhorst D."/>
            <person name="Vernikos G."/>
            <person name="Davidson S."/>
            <person name="Churcher C."/>
            <person name="Quail M.A."/>
            <person name="Stevens M."/>
            <person name="Jones M.A."/>
            <person name="Watson M."/>
            <person name="Barron A."/>
            <person name="Layton A."/>
            <person name="Pickard D."/>
            <person name="Kingsley R.A."/>
            <person name="Bignell A."/>
            <person name="Clark L."/>
            <person name="Harris B."/>
            <person name="Ormond D."/>
            <person name="Abdellah Z."/>
            <person name="Brooks K."/>
            <person name="Cherevach I."/>
            <person name="Chillingworth T."/>
            <person name="Woodward J."/>
            <person name="Norberczak H."/>
            <person name="Lord A."/>
            <person name="Arrowsmith C."/>
            <person name="Jagels K."/>
            <person name="Moule S."/>
            <person name="Mungall K."/>
            <person name="Saunders M."/>
            <person name="Whitehead S."/>
            <person name="Chabalgoity J.A."/>
            <person name="Maskell D."/>
            <person name="Humphreys T."/>
            <person name="Roberts M."/>
            <person name="Barrow P.A."/>
            <person name="Dougan G."/>
            <person name="Parkhill J."/>
        </authorList>
    </citation>
    <scope>NUCLEOTIDE SEQUENCE [LARGE SCALE GENOMIC DNA]</scope>
    <source>
        <strain>287/91 / NCTC 13346</strain>
    </source>
</reference>
<proteinExistence type="inferred from homology"/>
<protein>
    <recommendedName>
        <fullName evidence="1">Probable Fe(2+)-trafficking protein</fullName>
    </recommendedName>
</protein>
<organism>
    <name type="scientific">Salmonella gallinarum (strain 287/91 / NCTC 13346)</name>
    <dbReference type="NCBI Taxonomy" id="550538"/>
    <lineage>
        <taxon>Bacteria</taxon>
        <taxon>Pseudomonadati</taxon>
        <taxon>Pseudomonadota</taxon>
        <taxon>Gammaproteobacteria</taxon>
        <taxon>Enterobacterales</taxon>
        <taxon>Enterobacteriaceae</taxon>
        <taxon>Salmonella</taxon>
    </lineage>
</organism>
<comment type="function">
    <text evidence="1">Could be a mediator in iron transactions between iron acquisition and iron-requiring processes, such as synthesis and/or repair of Fe-S clusters in biosynthetic enzymes.</text>
</comment>
<comment type="subunit">
    <text evidence="1">Monomer.</text>
</comment>
<comment type="similarity">
    <text evidence="1">Belongs to the Fe(2+)-trafficking protein family.</text>
</comment>